<feature type="chain" id="PRO_0000135783" description="Histidinol dehydrogenase">
    <location>
        <begin position="1"/>
        <end position="431"/>
    </location>
</feature>
<feature type="active site" description="Proton acceptor" evidence="1">
    <location>
        <position position="327"/>
    </location>
</feature>
<feature type="active site" description="Proton acceptor" evidence="1">
    <location>
        <position position="328"/>
    </location>
</feature>
<feature type="binding site" evidence="1">
    <location>
        <position position="129"/>
    </location>
    <ligand>
        <name>NAD(+)</name>
        <dbReference type="ChEBI" id="CHEBI:57540"/>
    </ligand>
</feature>
<feature type="binding site" evidence="1">
    <location>
        <position position="191"/>
    </location>
    <ligand>
        <name>NAD(+)</name>
        <dbReference type="ChEBI" id="CHEBI:57540"/>
    </ligand>
</feature>
<feature type="binding site" evidence="1">
    <location>
        <position position="214"/>
    </location>
    <ligand>
        <name>NAD(+)</name>
        <dbReference type="ChEBI" id="CHEBI:57540"/>
    </ligand>
</feature>
<feature type="binding site" evidence="1">
    <location>
        <position position="237"/>
    </location>
    <ligand>
        <name>substrate</name>
    </ligand>
</feature>
<feature type="binding site" evidence="1">
    <location>
        <position position="259"/>
    </location>
    <ligand>
        <name>substrate</name>
    </ligand>
</feature>
<feature type="binding site" evidence="1">
    <location>
        <position position="259"/>
    </location>
    <ligand>
        <name>Zn(2+)</name>
        <dbReference type="ChEBI" id="CHEBI:29105"/>
    </ligand>
</feature>
<feature type="binding site" evidence="1">
    <location>
        <position position="262"/>
    </location>
    <ligand>
        <name>substrate</name>
    </ligand>
</feature>
<feature type="binding site" evidence="1">
    <location>
        <position position="262"/>
    </location>
    <ligand>
        <name>Zn(2+)</name>
        <dbReference type="ChEBI" id="CHEBI:29105"/>
    </ligand>
</feature>
<feature type="binding site" evidence="1">
    <location>
        <position position="328"/>
    </location>
    <ligand>
        <name>substrate</name>
    </ligand>
</feature>
<feature type="binding site" evidence="1">
    <location>
        <position position="361"/>
    </location>
    <ligand>
        <name>substrate</name>
    </ligand>
</feature>
<feature type="binding site" evidence="1">
    <location>
        <position position="361"/>
    </location>
    <ligand>
        <name>Zn(2+)</name>
        <dbReference type="ChEBI" id="CHEBI:29105"/>
    </ligand>
</feature>
<feature type="binding site" evidence="1">
    <location>
        <position position="415"/>
    </location>
    <ligand>
        <name>substrate</name>
    </ligand>
</feature>
<feature type="binding site" evidence="1">
    <location>
        <position position="420"/>
    </location>
    <ligand>
        <name>substrate</name>
    </ligand>
</feature>
<feature type="binding site" evidence="1">
    <location>
        <position position="420"/>
    </location>
    <ligand>
        <name>Zn(2+)</name>
        <dbReference type="ChEBI" id="CHEBI:29105"/>
    </ligand>
</feature>
<feature type="sequence variant" description="In strain: IL1403.">
    <original>A</original>
    <variation>E</variation>
    <location>
        <position position="38"/>
    </location>
</feature>
<feature type="sequence variant" description="In strain: IL1403.">
    <original>N</original>
    <variation>S</variation>
    <location>
        <position position="43"/>
    </location>
</feature>
<feature type="sequence variant" description="In strain: IL1403.">
    <original>R</original>
    <variation>P</variation>
    <location>
        <position position="69"/>
    </location>
</feature>
<feature type="sequence variant" description="In strain: IL1403.">
    <original>A</original>
    <variation>T</variation>
    <location>
        <position position="74"/>
    </location>
</feature>
<feature type="sequence variant" description="In strain: IL1403.">
    <original>A</original>
    <variation>T</variation>
    <location>
        <position position="164"/>
    </location>
</feature>
<feature type="sequence variant" description="In strain: IL1403.">
    <original>K</original>
    <variation>E</variation>
    <location>
        <position position="245"/>
    </location>
</feature>
<feature type="sequence variant" description="In strain: IL1403.">
    <original>K</original>
    <variation>N</variation>
    <location>
        <position position="248"/>
    </location>
</feature>
<feature type="sequence variant" description="In strain: IL1403.">
    <original>R</original>
    <variation>S</variation>
    <location>
        <position position="295"/>
    </location>
</feature>
<feature type="sequence variant" description="In strain: IL1403.">
    <original>SIR</original>
    <variation>YIS</variation>
    <location>
        <begin position="301"/>
        <end position="303"/>
    </location>
</feature>
<feature type="sequence variant" description="In strain: IL1403.">
    <original>D</original>
    <variation>E</variation>
    <location>
        <position position="316"/>
    </location>
</feature>
<feature type="sequence variant" description="In strain: IL1403.">
    <original>D</original>
    <variation>A</variation>
    <location>
        <position position="403"/>
    </location>
</feature>
<feature type="sequence conflict" description="In Ref. 3; AAK05307." evidence="2" ref="3">
    <original>V</original>
    <variation>L</variation>
    <location>
        <position position="25"/>
    </location>
</feature>
<sequence length="431" mass="47411">MLKQIDYQGKLEEIAEKFQGRKTEVSKEVNKTVQQIVADIQKNGDTALFNYAKKFDGYDVNTSNLLVTRMEREAGLEQIDEDYFRILRRTKSQIEEFHKHQLGNSWNIFKENGVIMGQIARPLERVALYVPGGTAAYPSTVIMNAVPALLAGVKEIIMITPVKADGKVNPNILAAAEVCGIETIYKVGGAQGVAAVAYGTESIPKVDKIVGPGNIFVATAKKICYGVVDIDMIAGPSEVLVIADKTAKPKYIAADLMAQAEHDKLASAILVTTSEKLVQQVDEELNRQVQNLERREIIESSIRNYGGAIVVKNIDDAFDVSNQLAPEHLEVLTSEPLTQLPKIKNAGSIFIGEYTPEPLGDYMSGSNHVLPTGGTAKFYSGLGVYNFIKYLTYSYYPKEVLADFKEDVETFAKSEGLTAHANSISVRFDEM</sequence>
<protein>
    <recommendedName>
        <fullName>Histidinol dehydrogenase</fullName>
        <shortName>HDH</shortName>
        <ecNumber>1.1.1.23</ecNumber>
    </recommendedName>
</protein>
<organism>
    <name type="scientific">Lactococcus lactis subsp. lactis (strain IL1403)</name>
    <name type="common">Streptococcus lactis</name>
    <dbReference type="NCBI Taxonomy" id="272623"/>
    <lineage>
        <taxon>Bacteria</taxon>
        <taxon>Bacillati</taxon>
        <taxon>Bacillota</taxon>
        <taxon>Bacilli</taxon>
        <taxon>Lactobacillales</taxon>
        <taxon>Streptococcaceae</taxon>
        <taxon>Lactococcus</taxon>
    </lineage>
</organism>
<proteinExistence type="inferred from homology"/>
<comment type="function">
    <text evidence="1">Catalyzes the sequential NAD-dependent oxidations of L-histidinol to L-histidinaldehyde and then to L-histidine.</text>
</comment>
<comment type="catalytic activity">
    <reaction>
        <text>L-histidinol + 2 NAD(+) + H2O = L-histidine + 2 NADH + 3 H(+)</text>
        <dbReference type="Rhea" id="RHEA:20641"/>
        <dbReference type="ChEBI" id="CHEBI:15377"/>
        <dbReference type="ChEBI" id="CHEBI:15378"/>
        <dbReference type="ChEBI" id="CHEBI:57540"/>
        <dbReference type="ChEBI" id="CHEBI:57595"/>
        <dbReference type="ChEBI" id="CHEBI:57699"/>
        <dbReference type="ChEBI" id="CHEBI:57945"/>
        <dbReference type="EC" id="1.1.1.23"/>
    </reaction>
</comment>
<comment type="cofactor">
    <cofactor evidence="1">
        <name>Zn(2+)</name>
        <dbReference type="ChEBI" id="CHEBI:29105"/>
    </cofactor>
    <text evidence="1">Binds 1 zinc ion per subunit.</text>
</comment>
<comment type="pathway">
    <text>Amino-acid biosynthesis; L-histidine biosynthesis; L-histidine from 5-phospho-alpha-D-ribose 1-diphosphate: step 9/9.</text>
</comment>
<comment type="similarity">
    <text evidence="2">Belongs to the histidinol dehydrogenase family.</text>
</comment>
<comment type="caution">
    <text evidence="2">This protein is inactive in the dairy strain IL1403. The histidine biosynthesis pathway is not functional in the dairy strain IL1403.</text>
</comment>
<accession>Q02136</accession>
<name>HISX_LACLA</name>
<dbReference type="EC" id="1.1.1.23"/>
<dbReference type="EMBL" id="U92974">
    <property type="status" value="NOT_ANNOTATED_CDS"/>
    <property type="molecule type" value="Genomic_DNA"/>
</dbReference>
<dbReference type="EMBL" id="AE005176">
    <property type="protein sequence ID" value="AAK05307.1"/>
    <property type="molecule type" value="Genomic_DNA"/>
</dbReference>
<dbReference type="PIR" id="A86776">
    <property type="entry name" value="A86776"/>
</dbReference>
<dbReference type="PIR" id="E45734">
    <property type="entry name" value="E45734"/>
</dbReference>
<dbReference type="RefSeq" id="NP_267365.1">
    <property type="nucleotide sequence ID" value="NC_002662.1"/>
</dbReference>
<dbReference type="SMR" id="Q02136"/>
<dbReference type="PaxDb" id="272623-L0067"/>
<dbReference type="EnsemblBacteria" id="AAK05307">
    <property type="protein sequence ID" value="AAK05307"/>
    <property type="gene ID" value="L0067"/>
</dbReference>
<dbReference type="KEGG" id="lla:L0067"/>
<dbReference type="PATRIC" id="fig|272623.7.peg.1304"/>
<dbReference type="eggNOG" id="COG0141">
    <property type="taxonomic scope" value="Bacteria"/>
</dbReference>
<dbReference type="HOGENOM" id="CLU_006732_3_0_9"/>
<dbReference type="OrthoDB" id="9805269at2"/>
<dbReference type="UniPathway" id="UPA00031">
    <property type="reaction ID" value="UER00014"/>
</dbReference>
<dbReference type="Proteomes" id="UP000002196">
    <property type="component" value="Chromosome"/>
</dbReference>
<dbReference type="GO" id="GO:0005829">
    <property type="term" value="C:cytosol"/>
    <property type="evidence" value="ECO:0007669"/>
    <property type="project" value="TreeGrafter"/>
</dbReference>
<dbReference type="GO" id="GO:0004399">
    <property type="term" value="F:histidinol dehydrogenase activity"/>
    <property type="evidence" value="ECO:0007669"/>
    <property type="project" value="UniProtKB-UniRule"/>
</dbReference>
<dbReference type="GO" id="GO:0051287">
    <property type="term" value="F:NAD binding"/>
    <property type="evidence" value="ECO:0007669"/>
    <property type="project" value="InterPro"/>
</dbReference>
<dbReference type="GO" id="GO:0008270">
    <property type="term" value="F:zinc ion binding"/>
    <property type="evidence" value="ECO:0007669"/>
    <property type="project" value="UniProtKB-UniRule"/>
</dbReference>
<dbReference type="GO" id="GO:0000105">
    <property type="term" value="P:L-histidine biosynthetic process"/>
    <property type="evidence" value="ECO:0007669"/>
    <property type="project" value="UniProtKB-UniRule"/>
</dbReference>
<dbReference type="CDD" id="cd06572">
    <property type="entry name" value="Histidinol_dh"/>
    <property type="match status" value="1"/>
</dbReference>
<dbReference type="FunFam" id="3.40.50.1980:FF:000001">
    <property type="entry name" value="Histidinol dehydrogenase"/>
    <property type="match status" value="1"/>
</dbReference>
<dbReference type="FunFam" id="3.40.50.1980:FF:000026">
    <property type="entry name" value="Histidinol dehydrogenase"/>
    <property type="match status" value="1"/>
</dbReference>
<dbReference type="Gene3D" id="1.20.5.1300">
    <property type="match status" value="1"/>
</dbReference>
<dbReference type="Gene3D" id="3.40.50.1980">
    <property type="entry name" value="Nitrogenase molybdenum iron protein domain"/>
    <property type="match status" value="2"/>
</dbReference>
<dbReference type="HAMAP" id="MF_01024">
    <property type="entry name" value="HisD"/>
    <property type="match status" value="1"/>
</dbReference>
<dbReference type="InterPro" id="IPR016161">
    <property type="entry name" value="Ald_DH/histidinol_DH"/>
</dbReference>
<dbReference type="InterPro" id="IPR001692">
    <property type="entry name" value="Histidinol_DH_CS"/>
</dbReference>
<dbReference type="InterPro" id="IPR022695">
    <property type="entry name" value="Histidinol_DH_monofunct"/>
</dbReference>
<dbReference type="InterPro" id="IPR012131">
    <property type="entry name" value="Hstdl_DH"/>
</dbReference>
<dbReference type="NCBIfam" id="TIGR00069">
    <property type="entry name" value="hisD"/>
    <property type="match status" value="1"/>
</dbReference>
<dbReference type="PANTHER" id="PTHR21256:SF2">
    <property type="entry name" value="HISTIDINE BIOSYNTHESIS TRIFUNCTIONAL PROTEIN"/>
    <property type="match status" value="1"/>
</dbReference>
<dbReference type="PANTHER" id="PTHR21256">
    <property type="entry name" value="HISTIDINOL DEHYDROGENASE HDH"/>
    <property type="match status" value="1"/>
</dbReference>
<dbReference type="Pfam" id="PF00815">
    <property type="entry name" value="Histidinol_dh"/>
    <property type="match status" value="1"/>
</dbReference>
<dbReference type="PIRSF" id="PIRSF000099">
    <property type="entry name" value="Histidinol_dh"/>
    <property type="match status" value="1"/>
</dbReference>
<dbReference type="PRINTS" id="PR00083">
    <property type="entry name" value="HOLDHDRGNASE"/>
</dbReference>
<dbReference type="SUPFAM" id="SSF53720">
    <property type="entry name" value="ALDH-like"/>
    <property type="match status" value="1"/>
</dbReference>
<dbReference type="PROSITE" id="PS00611">
    <property type="entry name" value="HISOL_DEHYDROGENASE"/>
    <property type="match status" value="1"/>
</dbReference>
<reference key="1">
    <citation type="journal article" date="1992" name="J. Bacteriol.">
        <title>Histidine biosynthesis genes in Lactococcus lactis subsp. lactis.</title>
        <authorList>
            <person name="Delorme C."/>
            <person name="Ehrlich S.D."/>
            <person name="Renault P."/>
        </authorList>
    </citation>
    <scope>NUCLEOTIDE SEQUENCE [GENOMIC DNA]</scope>
    <source>
        <strain>NCDO 2118</strain>
    </source>
</reference>
<reference key="2">
    <citation type="journal article" date="1993" name="J. Bacteriol.">
        <title>Gene inactivation in Lactococcus lactis: histidine biosynthesis.</title>
        <authorList>
            <person name="Delorme C."/>
            <person name="Godon J.-J."/>
            <person name="Ehrlich S.D."/>
            <person name="Renault P."/>
        </authorList>
    </citation>
    <scope>NUCLEOTIDE SEQUENCE [GENOMIC DNA]</scope>
    <source>
        <strain>IL1403</strain>
    </source>
</reference>
<reference key="3">
    <citation type="journal article" date="2001" name="Genome Res.">
        <title>The complete genome sequence of the lactic acid bacterium Lactococcus lactis ssp. lactis IL1403.</title>
        <authorList>
            <person name="Bolotin A."/>
            <person name="Wincker P."/>
            <person name="Mauger S."/>
            <person name="Jaillon O."/>
            <person name="Malarme K."/>
            <person name="Weissenbach J."/>
            <person name="Ehrlich S.D."/>
            <person name="Sorokin A."/>
        </authorList>
    </citation>
    <scope>NUCLEOTIDE SEQUENCE [LARGE SCALE GENOMIC DNA]</scope>
    <source>
        <strain>IL1403</strain>
    </source>
</reference>
<gene>
    <name type="primary">hisD</name>
    <name type="ordered locus">LL1209</name>
    <name type="ORF">L0067</name>
</gene>
<keyword id="KW-0028">Amino-acid biosynthesis</keyword>
<keyword id="KW-0368">Histidine biosynthesis</keyword>
<keyword id="KW-0479">Metal-binding</keyword>
<keyword id="KW-0520">NAD</keyword>
<keyword id="KW-0560">Oxidoreductase</keyword>
<keyword id="KW-1185">Reference proteome</keyword>
<keyword id="KW-0862">Zinc</keyword>
<evidence type="ECO:0000250" key="1"/>
<evidence type="ECO:0000305" key="2"/>